<reference key="1">
    <citation type="journal article" date="2007" name="PLoS Genet.">
        <title>Meningococcal genetic variation mechanisms viewed through comparative analysis of serogroup C strain FAM18.</title>
        <authorList>
            <person name="Bentley S.D."/>
            <person name="Vernikos G.S."/>
            <person name="Snyder L.A.S."/>
            <person name="Churcher C."/>
            <person name="Arrowsmith C."/>
            <person name="Chillingworth T."/>
            <person name="Cronin A."/>
            <person name="Davis P.H."/>
            <person name="Holroyd N.E."/>
            <person name="Jagels K."/>
            <person name="Maddison M."/>
            <person name="Moule S."/>
            <person name="Rabbinowitsch E."/>
            <person name="Sharp S."/>
            <person name="Unwin L."/>
            <person name="Whitehead S."/>
            <person name="Quail M.A."/>
            <person name="Achtman M."/>
            <person name="Barrell B.G."/>
            <person name="Saunders N.J."/>
            <person name="Parkhill J."/>
        </authorList>
    </citation>
    <scope>NUCLEOTIDE SEQUENCE [LARGE SCALE GENOMIC DNA]</scope>
    <source>
        <strain>ATCC 700532 / DSM 15464 / FAM18</strain>
    </source>
</reference>
<dbReference type="EC" id="2.7.4.6" evidence="1"/>
<dbReference type="EMBL" id="AM421808">
    <property type="protein sequence ID" value="CAM10478.1"/>
    <property type="molecule type" value="Genomic_DNA"/>
</dbReference>
<dbReference type="RefSeq" id="WP_002213338.1">
    <property type="nucleotide sequence ID" value="NC_008767.1"/>
</dbReference>
<dbReference type="SMR" id="A1KUD5"/>
<dbReference type="GeneID" id="93385892"/>
<dbReference type="KEGG" id="nmc:NMC1244"/>
<dbReference type="HOGENOM" id="CLU_060216_8_1_4"/>
<dbReference type="Proteomes" id="UP000002286">
    <property type="component" value="Chromosome"/>
</dbReference>
<dbReference type="GO" id="GO:0005737">
    <property type="term" value="C:cytoplasm"/>
    <property type="evidence" value="ECO:0007669"/>
    <property type="project" value="UniProtKB-SubCell"/>
</dbReference>
<dbReference type="GO" id="GO:0005524">
    <property type="term" value="F:ATP binding"/>
    <property type="evidence" value="ECO:0007669"/>
    <property type="project" value="UniProtKB-UniRule"/>
</dbReference>
<dbReference type="GO" id="GO:0046872">
    <property type="term" value="F:metal ion binding"/>
    <property type="evidence" value="ECO:0007669"/>
    <property type="project" value="UniProtKB-KW"/>
</dbReference>
<dbReference type="GO" id="GO:0004550">
    <property type="term" value="F:nucleoside diphosphate kinase activity"/>
    <property type="evidence" value="ECO:0007669"/>
    <property type="project" value="UniProtKB-UniRule"/>
</dbReference>
<dbReference type="GO" id="GO:0006241">
    <property type="term" value="P:CTP biosynthetic process"/>
    <property type="evidence" value="ECO:0007669"/>
    <property type="project" value="UniProtKB-UniRule"/>
</dbReference>
<dbReference type="GO" id="GO:0006183">
    <property type="term" value="P:GTP biosynthetic process"/>
    <property type="evidence" value="ECO:0007669"/>
    <property type="project" value="UniProtKB-UniRule"/>
</dbReference>
<dbReference type="GO" id="GO:0006228">
    <property type="term" value="P:UTP biosynthetic process"/>
    <property type="evidence" value="ECO:0007669"/>
    <property type="project" value="UniProtKB-UniRule"/>
</dbReference>
<dbReference type="CDD" id="cd04413">
    <property type="entry name" value="NDPk_I"/>
    <property type="match status" value="1"/>
</dbReference>
<dbReference type="FunFam" id="3.30.70.141:FF:000001">
    <property type="entry name" value="Nucleoside diphosphate kinase"/>
    <property type="match status" value="1"/>
</dbReference>
<dbReference type="Gene3D" id="3.30.70.141">
    <property type="entry name" value="Nucleoside diphosphate kinase-like domain"/>
    <property type="match status" value="1"/>
</dbReference>
<dbReference type="HAMAP" id="MF_00451">
    <property type="entry name" value="NDP_kinase"/>
    <property type="match status" value="1"/>
</dbReference>
<dbReference type="InterPro" id="IPR034907">
    <property type="entry name" value="NDK-like_dom"/>
</dbReference>
<dbReference type="InterPro" id="IPR036850">
    <property type="entry name" value="NDK-like_dom_sf"/>
</dbReference>
<dbReference type="InterPro" id="IPR001564">
    <property type="entry name" value="Nucleoside_diP_kinase"/>
</dbReference>
<dbReference type="InterPro" id="IPR023005">
    <property type="entry name" value="Nucleoside_diP_kinase_AS"/>
</dbReference>
<dbReference type="NCBIfam" id="NF001908">
    <property type="entry name" value="PRK00668.1"/>
    <property type="match status" value="1"/>
</dbReference>
<dbReference type="PANTHER" id="PTHR11349">
    <property type="entry name" value="NUCLEOSIDE DIPHOSPHATE KINASE"/>
    <property type="match status" value="1"/>
</dbReference>
<dbReference type="Pfam" id="PF00334">
    <property type="entry name" value="NDK"/>
    <property type="match status" value="1"/>
</dbReference>
<dbReference type="PRINTS" id="PR01243">
    <property type="entry name" value="NUCDPKINASE"/>
</dbReference>
<dbReference type="SMART" id="SM00562">
    <property type="entry name" value="NDK"/>
    <property type="match status" value="1"/>
</dbReference>
<dbReference type="SUPFAM" id="SSF54919">
    <property type="entry name" value="Nucleoside diphosphate kinase, NDK"/>
    <property type="match status" value="1"/>
</dbReference>
<dbReference type="PROSITE" id="PS00469">
    <property type="entry name" value="NDPK"/>
    <property type="match status" value="1"/>
</dbReference>
<dbReference type="PROSITE" id="PS51374">
    <property type="entry name" value="NDPK_LIKE"/>
    <property type="match status" value="1"/>
</dbReference>
<organism>
    <name type="scientific">Neisseria meningitidis serogroup C / serotype 2a (strain ATCC 700532 / DSM 15464 / FAM18)</name>
    <dbReference type="NCBI Taxonomy" id="272831"/>
    <lineage>
        <taxon>Bacteria</taxon>
        <taxon>Pseudomonadati</taxon>
        <taxon>Pseudomonadota</taxon>
        <taxon>Betaproteobacteria</taxon>
        <taxon>Neisseriales</taxon>
        <taxon>Neisseriaceae</taxon>
        <taxon>Neisseria</taxon>
    </lineage>
</organism>
<feature type="chain" id="PRO_1000026259" description="Nucleoside diphosphate kinase">
    <location>
        <begin position="1"/>
        <end position="141"/>
    </location>
</feature>
<feature type="active site" description="Pros-phosphohistidine intermediate" evidence="1">
    <location>
        <position position="117"/>
    </location>
</feature>
<feature type="binding site" evidence="1">
    <location>
        <position position="11"/>
    </location>
    <ligand>
        <name>ATP</name>
        <dbReference type="ChEBI" id="CHEBI:30616"/>
    </ligand>
</feature>
<feature type="binding site" evidence="1">
    <location>
        <position position="59"/>
    </location>
    <ligand>
        <name>ATP</name>
        <dbReference type="ChEBI" id="CHEBI:30616"/>
    </ligand>
</feature>
<feature type="binding site" evidence="1">
    <location>
        <position position="87"/>
    </location>
    <ligand>
        <name>ATP</name>
        <dbReference type="ChEBI" id="CHEBI:30616"/>
    </ligand>
</feature>
<feature type="binding site" evidence="1">
    <location>
        <position position="93"/>
    </location>
    <ligand>
        <name>ATP</name>
        <dbReference type="ChEBI" id="CHEBI:30616"/>
    </ligand>
</feature>
<feature type="binding site" evidence="1">
    <location>
        <position position="104"/>
    </location>
    <ligand>
        <name>ATP</name>
        <dbReference type="ChEBI" id="CHEBI:30616"/>
    </ligand>
</feature>
<feature type="binding site" evidence="1">
    <location>
        <position position="114"/>
    </location>
    <ligand>
        <name>ATP</name>
        <dbReference type="ChEBI" id="CHEBI:30616"/>
    </ligand>
</feature>
<evidence type="ECO:0000255" key="1">
    <source>
        <dbReference type="HAMAP-Rule" id="MF_00451"/>
    </source>
</evidence>
<sequence length="141" mass="15427">MAIERTISIIKPDAVGKNVIGKIYSRFEENGLKIVAAKMKQLTLKEAQEFYAVHKDRPFYAGLVEFMTGGPVMIQVLEGENAVLKNRELMGATNPSEAAEGTIRADFATSVSINAVHGSDSVENAALEIAYFFSQTEICPR</sequence>
<name>NDK_NEIMF</name>
<protein>
    <recommendedName>
        <fullName evidence="1">Nucleoside diphosphate kinase</fullName>
        <shortName evidence="1">NDK</shortName>
        <shortName evidence="1">NDP kinase</shortName>
        <ecNumber evidence="1">2.7.4.6</ecNumber>
    </recommendedName>
    <alternativeName>
        <fullName evidence="1">Nucleoside-2-P kinase</fullName>
    </alternativeName>
</protein>
<keyword id="KW-0067">ATP-binding</keyword>
<keyword id="KW-0963">Cytoplasm</keyword>
<keyword id="KW-0418">Kinase</keyword>
<keyword id="KW-0460">Magnesium</keyword>
<keyword id="KW-0479">Metal-binding</keyword>
<keyword id="KW-0546">Nucleotide metabolism</keyword>
<keyword id="KW-0547">Nucleotide-binding</keyword>
<keyword id="KW-0597">Phosphoprotein</keyword>
<keyword id="KW-0808">Transferase</keyword>
<gene>
    <name evidence="1" type="primary">ndk</name>
    <name type="ordered locus">NMC1244</name>
</gene>
<comment type="function">
    <text evidence="1">Major role in the synthesis of nucleoside triphosphates other than ATP. The ATP gamma phosphate is transferred to the NDP beta phosphate via a ping-pong mechanism, using a phosphorylated active-site intermediate.</text>
</comment>
<comment type="catalytic activity">
    <reaction evidence="1">
        <text>a 2'-deoxyribonucleoside 5'-diphosphate + ATP = a 2'-deoxyribonucleoside 5'-triphosphate + ADP</text>
        <dbReference type="Rhea" id="RHEA:44640"/>
        <dbReference type="ChEBI" id="CHEBI:30616"/>
        <dbReference type="ChEBI" id="CHEBI:61560"/>
        <dbReference type="ChEBI" id="CHEBI:73316"/>
        <dbReference type="ChEBI" id="CHEBI:456216"/>
        <dbReference type="EC" id="2.7.4.6"/>
    </reaction>
</comment>
<comment type="catalytic activity">
    <reaction evidence="1">
        <text>a ribonucleoside 5'-diphosphate + ATP = a ribonucleoside 5'-triphosphate + ADP</text>
        <dbReference type="Rhea" id="RHEA:18113"/>
        <dbReference type="ChEBI" id="CHEBI:30616"/>
        <dbReference type="ChEBI" id="CHEBI:57930"/>
        <dbReference type="ChEBI" id="CHEBI:61557"/>
        <dbReference type="ChEBI" id="CHEBI:456216"/>
        <dbReference type="EC" id="2.7.4.6"/>
    </reaction>
</comment>
<comment type="cofactor">
    <cofactor evidence="1">
        <name>Mg(2+)</name>
        <dbReference type="ChEBI" id="CHEBI:18420"/>
    </cofactor>
</comment>
<comment type="subunit">
    <text evidence="1">Homotetramer.</text>
</comment>
<comment type="subcellular location">
    <subcellularLocation>
        <location evidence="1">Cytoplasm</location>
    </subcellularLocation>
</comment>
<comment type="similarity">
    <text evidence="1">Belongs to the NDK family.</text>
</comment>
<proteinExistence type="inferred from homology"/>
<accession>A1KUD5</accession>